<reference key="1">
    <citation type="journal article" date="2001" name="Lancet">
        <title>Whole genome sequencing of meticillin-resistant Staphylococcus aureus.</title>
        <authorList>
            <person name="Kuroda M."/>
            <person name="Ohta T."/>
            <person name="Uchiyama I."/>
            <person name="Baba T."/>
            <person name="Yuzawa H."/>
            <person name="Kobayashi I."/>
            <person name="Cui L."/>
            <person name="Oguchi A."/>
            <person name="Aoki K."/>
            <person name="Nagai Y."/>
            <person name="Lian J.-Q."/>
            <person name="Ito T."/>
            <person name="Kanamori M."/>
            <person name="Matsumaru H."/>
            <person name="Maruyama A."/>
            <person name="Murakami H."/>
            <person name="Hosoyama A."/>
            <person name="Mizutani-Ui Y."/>
            <person name="Takahashi N.K."/>
            <person name="Sawano T."/>
            <person name="Inoue R."/>
            <person name="Kaito C."/>
            <person name="Sekimizu K."/>
            <person name="Hirakawa H."/>
            <person name="Kuhara S."/>
            <person name="Goto S."/>
            <person name="Yabuzaki J."/>
            <person name="Kanehisa M."/>
            <person name="Yamashita A."/>
            <person name="Oshima K."/>
            <person name="Furuya K."/>
            <person name="Yoshino C."/>
            <person name="Shiba T."/>
            <person name="Hattori M."/>
            <person name="Ogasawara N."/>
            <person name="Hayashi H."/>
            <person name="Hiramatsu K."/>
        </authorList>
    </citation>
    <scope>NUCLEOTIDE SEQUENCE [LARGE SCALE GENOMIC DNA]</scope>
    <source>
        <strain>N315</strain>
    </source>
</reference>
<keyword id="KW-1003">Cell membrane</keyword>
<keyword id="KW-0342">GTP-binding</keyword>
<keyword id="KW-0406">Ion transport</keyword>
<keyword id="KW-0408">Iron</keyword>
<keyword id="KW-0410">Iron transport</keyword>
<keyword id="KW-0472">Membrane</keyword>
<keyword id="KW-0547">Nucleotide-binding</keyword>
<keyword id="KW-0812">Transmembrane</keyword>
<keyword id="KW-1133">Transmembrane helix</keyword>
<keyword id="KW-0813">Transport</keyword>
<feature type="chain" id="PRO_0000210843" description="Fe(2+) transporter FeoB">
    <location>
        <begin position="1"/>
        <end position="664"/>
    </location>
</feature>
<feature type="transmembrane region" description="Helical" evidence="2">
    <location>
        <begin position="281"/>
        <end position="301"/>
    </location>
</feature>
<feature type="transmembrane region" description="Helical" evidence="2">
    <location>
        <begin position="342"/>
        <end position="362"/>
    </location>
</feature>
<feature type="transmembrane region" description="Helical" evidence="2">
    <location>
        <begin position="382"/>
        <end position="402"/>
    </location>
</feature>
<feature type="transmembrane region" description="Helical" evidence="2">
    <location>
        <begin position="425"/>
        <end position="445"/>
    </location>
</feature>
<feature type="transmembrane region" description="Helical" evidence="2">
    <location>
        <begin position="452"/>
        <end position="472"/>
    </location>
</feature>
<feature type="transmembrane region" description="Helical" evidence="2">
    <location>
        <begin position="516"/>
        <end position="536"/>
    </location>
</feature>
<feature type="transmembrane region" description="Helical" evidence="2">
    <location>
        <begin position="544"/>
        <end position="564"/>
    </location>
</feature>
<feature type="transmembrane region" description="Helical" evidence="2">
    <location>
        <begin position="567"/>
        <end position="587"/>
    </location>
</feature>
<feature type="transmembrane region" description="Helical" evidence="2">
    <location>
        <begin position="608"/>
        <end position="628"/>
    </location>
</feature>
<feature type="transmembrane region" description="Helical" evidence="2">
    <location>
        <begin position="637"/>
        <end position="657"/>
    </location>
</feature>
<feature type="domain" description="FeoB-type G" evidence="3">
    <location>
        <begin position="1"/>
        <end position="161"/>
    </location>
</feature>
<feature type="binding site" evidence="3">
    <location>
        <begin position="8"/>
        <end position="15"/>
    </location>
    <ligand>
        <name>GTP</name>
        <dbReference type="ChEBI" id="CHEBI:37565"/>
        <label>1</label>
    </ligand>
</feature>
<feature type="binding site" evidence="3">
    <location>
        <begin position="33"/>
        <end position="37"/>
    </location>
    <ligand>
        <name>GTP</name>
        <dbReference type="ChEBI" id="CHEBI:37565"/>
        <label>2</label>
    </ligand>
</feature>
<feature type="binding site" evidence="3">
    <location>
        <begin position="52"/>
        <end position="55"/>
    </location>
    <ligand>
        <name>GTP</name>
        <dbReference type="ChEBI" id="CHEBI:37565"/>
        <label>3</label>
    </ligand>
</feature>
<feature type="binding site" evidence="3">
    <location>
        <begin position="112"/>
        <end position="115"/>
    </location>
    <ligand>
        <name>GTP</name>
        <dbReference type="ChEBI" id="CHEBI:37565"/>
    </ligand>
</feature>
<feature type="binding site" evidence="3">
    <location>
        <begin position="141"/>
        <end position="143"/>
    </location>
    <ligand>
        <name>GTP</name>
        <dbReference type="ChEBI" id="CHEBI:37565"/>
    </ligand>
</feature>
<accession>Q7A3F2</accession>
<organism>
    <name type="scientific">Staphylococcus aureus (strain N315)</name>
    <dbReference type="NCBI Taxonomy" id="158879"/>
    <lineage>
        <taxon>Bacteria</taxon>
        <taxon>Bacillati</taxon>
        <taxon>Bacillota</taxon>
        <taxon>Bacilli</taxon>
        <taxon>Bacillales</taxon>
        <taxon>Staphylococcaceae</taxon>
        <taxon>Staphylococcus</taxon>
    </lineage>
</organism>
<comment type="function">
    <text evidence="1">Probable transporter of a GTP-driven Fe(2+) uptake system.</text>
</comment>
<comment type="subcellular location">
    <subcellularLocation>
        <location evidence="4">Cell membrane</location>
        <topology evidence="2">Multi-pass membrane protein</topology>
    </subcellularLocation>
</comment>
<comment type="similarity">
    <text evidence="3">Belongs to the TRAFAC class TrmE-Era-EngA-EngB-Septin-like GTPase superfamily. FeoB GTPase (TC 9.A.8) family.</text>
</comment>
<gene>
    <name type="primary">feoB</name>
    <name type="ordered locus">SA2337</name>
</gene>
<sequence>MENYCILGNPNVGKTSLFNALTGSYEYIGNWSGVTVEKKVGKLKENVGQLIDLPGTYDLSPISKDETVVTDYLLNDSFSGIINIVDASQLKRNVQLTVQLLELNQPIYIGLNMIDVATKRGIKIDYHKLMKKLKTPIFPVVARTGKGTKYLLGEIKHLGEGYQPHFKINYGEKIEETIKNMCQIIMTETSHDKYQARFIAIQFLLNNMQIANELNSEVVNKLSSLRDQVAEQVGAVSVRREMERIRNHYIETLLQDVVTYPDEDKQYFSSRIDKILTHKYIGMPIFLAIMWLIFQTTFTWIGTPLSDQLDAFIGGTFTDSVKTIMNYLGVIPFLQDLITDGIIAGVGSVLVFVPQIVVLFFFISLLEDSGYMARIAVLMDRIMESFGLSGKSFIPMIIGFGCNVPSIMAARSIENEKERLTTILIAPFMSCSARLPVYALFVGIFFKENQSLVVLSLYVLGIIMAFLVSTVLTKTILKNDNAIFIVELPTYRVPSIKTLWRSTWEKAKGFVRKAGTFIFGGSVVIWLLSYVGPHGINVNINQSFLHMVGSFFGMLVQPLGFGTWQAGATLVPGFLAKEVIVSSMAIIYSSGDAGLVNVIQNQFTPLSAYAFMIFILLYIPCVSTVAAIRKETYSWKWTALAVAYPLVTAYVLTFIFYQVGHLFV</sequence>
<protein>
    <recommendedName>
        <fullName evidence="4">Fe(2+) transporter FeoB</fullName>
    </recommendedName>
    <alternativeName>
        <fullName>Ferrous iron transport protein B</fullName>
    </alternativeName>
</protein>
<name>FEOB_STAAN</name>
<dbReference type="EMBL" id="BA000018">
    <property type="protein sequence ID" value="BAB43641.1"/>
    <property type="molecule type" value="Genomic_DNA"/>
</dbReference>
<dbReference type="PIR" id="G90059">
    <property type="entry name" value="G90059"/>
</dbReference>
<dbReference type="RefSeq" id="WP_000432915.1">
    <property type="nucleotide sequence ID" value="NC_002745.2"/>
</dbReference>
<dbReference type="SMR" id="Q7A3F2"/>
<dbReference type="EnsemblBacteria" id="BAB43641">
    <property type="protein sequence ID" value="BAB43641"/>
    <property type="gene ID" value="BAB43641"/>
</dbReference>
<dbReference type="KEGG" id="sau:SA2337"/>
<dbReference type="HOGENOM" id="CLU_013350_3_0_9"/>
<dbReference type="GO" id="GO:0005886">
    <property type="term" value="C:plasma membrane"/>
    <property type="evidence" value="ECO:0007669"/>
    <property type="project" value="UniProtKB-SubCell"/>
</dbReference>
<dbReference type="GO" id="GO:0015093">
    <property type="term" value="F:ferrous iron transmembrane transporter activity"/>
    <property type="evidence" value="ECO:0007669"/>
    <property type="project" value="InterPro"/>
</dbReference>
<dbReference type="GO" id="GO:0005525">
    <property type="term" value="F:GTP binding"/>
    <property type="evidence" value="ECO:0007669"/>
    <property type="project" value="UniProtKB-KW"/>
</dbReference>
<dbReference type="CDD" id="cd01879">
    <property type="entry name" value="FeoB"/>
    <property type="match status" value="1"/>
</dbReference>
<dbReference type="FunFam" id="3.40.50.300:FF:001475">
    <property type="entry name" value="Ferrous iron transport protein B"/>
    <property type="match status" value="1"/>
</dbReference>
<dbReference type="Gene3D" id="1.10.287.1770">
    <property type="match status" value="1"/>
</dbReference>
<dbReference type="Gene3D" id="3.40.50.300">
    <property type="entry name" value="P-loop containing nucleotide triphosphate hydrolases"/>
    <property type="match status" value="1"/>
</dbReference>
<dbReference type="InterPro" id="IPR003373">
    <property type="entry name" value="Fe2_transport_prot-B"/>
</dbReference>
<dbReference type="InterPro" id="IPR011640">
    <property type="entry name" value="Fe2_transport_prot_B_C"/>
</dbReference>
<dbReference type="InterPro" id="IPR041069">
    <property type="entry name" value="FeoB_Cyto"/>
</dbReference>
<dbReference type="InterPro" id="IPR050860">
    <property type="entry name" value="FeoB_GTPase"/>
</dbReference>
<dbReference type="InterPro" id="IPR030389">
    <property type="entry name" value="G_FEOB_dom"/>
</dbReference>
<dbReference type="InterPro" id="IPR011642">
    <property type="entry name" value="Gate_dom"/>
</dbReference>
<dbReference type="InterPro" id="IPR027417">
    <property type="entry name" value="P-loop_NTPase"/>
</dbReference>
<dbReference type="NCBIfam" id="TIGR00437">
    <property type="entry name" value="feoB"/>
    <property type="match status" value="1"/>
</dbReference>
<dbReference type="PANTHER" id="PTHR43185:SF1">
    <property type="entry name" value="FE(2+) TRANSPORTER FEOB"/>
    <property type="match status" value="1"/>
</dbReference>
<dbReference type="PANTHER" id="PTHR43185">
    <property type="entry name" value="FERROUS IRON TRANSPORT PROTEIN B"/>
    <property type="match status" value="1"/>
</dbReference>
<dbReference type="Pfam" id="PF07664">
    <property type="entry name" value="FeoB_C"/>
    <property type="match status" value="1"/>
</dbReference>
<dbReference type="Pfam" id="PF17910">
    <property type="entry name" value="FeoB_Cyto"/>
    <property type="match status" value="1"/>
</dbReference>
<dbReference type="Pfam" id="PF02421">
    <property type="entry name" value="FeoB_N"/>
    <property type="match status" value="1"/>
</dbReference>
<dbReference type="Pfam" id="PF07670">
    <property type="entry name" value="Gate"/>
    <property type="match status" value="2"/>
</dbReference>
<dbReference type="SUPFAM" id="SSF52540">
    <property type="entry name" value="P-loop containing nucleoside triphosphate hydrolases"/>
    <property type="match status" value="1"/>
</dbReference>
<dbReference type="PROSITE" id="PS51711">
    <property type="entry name" value="G_FEOB"/>
    <property type="match status" value="1"/>
</dbReference>
<evidence type="ECO:0000250" key="1">
    <source>
        <dbReference type="UniProtKB" id="P33650"/>
    </source>
</evidence>
<evidence type="ECO:0000255" key="2"/>
<evidence type="ECO:0000255" key="3">
    <source>
        <dbReference type="PROSITE-ProRule" id="PRU01048"/>
    </source>
</evidence>
<evidence type="ECO:0000305" key="4"/>
<proteinExistence type="inferred from homology"/>